<sequence length="1225" mass="136945">MVDVNRFKSMQITLASPSKVRSWSYGEVKKPETINYRTLKPEREGLFDEVIFGPTKDWECACGKYKRIRYRGIVCDRCGVEVTRTKVRRERMGHIELKAPVSHIWYFKGIPSRMGLTLDMSPRALEEVIYFAAYVVIDPKDTPLEHKSIMTEREYRERLREYGYGSFVAKMGAEAIQDLLKQVDLEKEIAELKEELKTATGQKRVKAIRRLDVLDAFYKSGNKPEWMILNILPVIPPDLRPMLQLDGGRFASSDLNDLYRRVINRNNRLARLLELNAPGIIVQNEKRMLQEAVDALIDNGRRGRPITGPGSRPLKSLSHMLKGKQGRFRQNLLGKRVDFSGRSVIAVGPTLKMYQCGVPREMAIELFKPFVMREIVARDIVQNVKAAKRLVERGDERIWDILEEVIKEHPVLLNRAPTLHRLGIQAFEPVLIDGKALRLHPLVCEAYNADFDGDQMAIHVPLSEEAQAEARILMLAAEHILNPKDGKPVVTPSQDMVLGNYYLTMEEAGREGEGMVFKDRDEAVMAYRNGYVHLHSRVGIATDSLNKPWTEEQRHKVLLTTVGKILFNDIMPEGLPYLQEPNNANLTEGVPAKYFLPLGGAIKEAISNLELNPPFKKKNLGNIIAEIFKRFRTTETSALLDRMKNLGYHHSTLAGLTVGIADIPVVDDKAEIIEESHKRVEQITKQFRRGMITDDERYNAVTAEWRAAREKLEKRLIANQDPKNPIVMMMDSGARGNISNFSQLAGMRGLMAAPNGRIMELPILSNFREGLSVLEMFFSTHGARKGMTDTALKTADSGYLTRRLVDVAQDVIIREDDCGTDRGLLIRSIAEGKEMIESLEERLNGRYTKKTVKHPETGAVIIGPNELITEDKAREIVNAGVEEVTIRSVFTCNTRHGVCRHCYGINLATGDAVEVGEAVGTIAAQSIGEPGTQLTMRTFHTGGVASNTDITQGLPRVQEIFEARNPKGEAVITEVKGQVTAIEEDASTRTKKVFVKGETGEGEYVVPFTARMRVEVGGQVARGAALTEGSIQPKRLLAVRDVLSVETYLLGEVQKVYRSQGVEIGDKHIEVMVRQMIRKVRVMDPGDTDLLMGTLMDINDFTDANKDVLIAGGVPATGRPVLMGITKASLETNSFLSAASFQETTRVLTDAAIRGKKDHLLGLKENVIIGKIIPAGTGMARYRNLEPHAVNEEEYLNPPVEEEGNEETTEVVVDTAVETVEETVE</sequence>
<proteinExistence type="inferred from homology"/>
<accession>B8ZNW6</accession>
<feature type="chain" id="PRO_1000165851" description="DNA-directed RNA polymerase subunit beta'">
    <location>
        <begin position="1"/>
        <end position="1225"/>
    </location>
</feature>
<feature type="binding site" evidence="1">
    <location>
        <position position="60"/>
    </location>
    <ligand>
        <name>Zn(2+)</name>
        <dbReference type="ChEBI" id="CHEBI:29105"/>
        <label>1</label>
    </ligand>
</feature>
<feature type="binding site" evidence="1">
    <location>
        <position position="62"/>
    </location>
    <ligand>
        <name>Zn(2+)</name>
        <dbReference type="ChEBI" id="CHEBI:29105"/>
        <label>1</label>
    </ligand>
</feature>
<feature type="binding site" evidence="1">
    <location>
        <position position="75"/>
    </location>
    <ligand>
        <name>Zn(2+)</name>
        <dbReference type="ChEBI" id="CHEBI:29105"/>
        <label>1</label>
    </ligand>
</feature>
<feature type="binding site" evidence="1">
    <location>
        <position position="78"/>
    </location>
    <ligand>
        <name>Zn(2+)</name>
        <dbReference type="ChEBI" id="CHEBI:29105"/>
        <label>1</label>
    </ligand>
</feature>
<feature type="binding site" evidence="1">
    <location>
        <position position="450"/>
    </location>
    <ligand>
        <name>Mg(2+)</name>
        <dbReference type="ChEBI" id="CHEBI:18420"/>
    </ligand>
</feature>
<feature type="binding site" evidence="1">
    <location>
        <position position="452"/>
    </location>
    <ligand>
        <name>Mg(2+)</name>
        <dbReference type="ChEBI" id="CHEBI:18420"/>
    </ligand>
</feature>
<feature type="binding site" evidence="1">
    <location>
        <position position="454"/>
    </location>
    <ligand>
        <name>Mg(2+)</name>
        <dbReference type="ChEBI" id="CHEBI:18420"/>
    </ligand>
</feature>
<feature type="binding site" evidence="1">
    <location>
        <position position="818"/>
    </location>
    <ligand>
        <name>Zn(2+)</name>
        <dbReference type="ChEBI" id="CHEBI:29105"/>
        <label>2</label>
    </ligand>
</feature>
<feature type="binding site" evidence="1">
    <location>
        <position position="892"/>
    </location>
    <ligand>
        <name>Zn(2+)</name>
        <dbReference type="ChEBI" id="CHEBI:29105"/>
        <label>2</label>
    </ligand>
</feature>
<feature type="binding site" evidence="1">
    <location>
        <position position="899"/>
    </location>
    <ligand>
        <name>Zn(2+)</name>
        <dbReference type="ChEBI" id="CHEBI:29105"/>
        <label>2</label>
    </ligand>
</feature>
<feature type="binding site" evidence="1">
    <location>
        <position position="902"/>
    </location>
    <ligand>
        <name>Zn(2+)</name>
        <dbReference type="ChEBI" id="CHEBI:29105"/>
        <label>2</label>
    </ligand>
</feature>
<name>RPOC_STRPJ</name>
<gene>
    <name evidence="1" type="primary">rpoC</name>
    <name type="ordered locus">SPN23F19810</name>
</gene>
<organism>
    <name type="scientific">Streptococcus pneumoniae (strain ATCC 700669 / Spain 23F-1)</name>
    <dbReference type="NCBI Taxonomy" id="561276"/>
    <lineage>
        <taxon>Bacteria</taxon>
        <taxon>Bacillati</taxon>
        <taxon>Bacillota</taxon>
        <taxon>Bacilli</taxon>
        <taxon>Lactobacillales</taxon>
        <taxon>Streptococcaceae</taxon>
        <taxon>Streptococcus</taxon>
    </lineage>
</organism>
<protein>
    <recommendedName>
        <fullName evidence="1">DNA-directed RNA polymerase subunit beta'</fullName>
        <shortName evidence="1">RNAP subunit beta'</shortName>
        <ecNumber evidence="1">2.7.7.6</ecNumber>
    </recommendedName>
    <alternativeName>
        <fullName evidence="1">RNA polymerase subunit beta'</fullName>
    </alternativeName>
    <alternativeName>
        <fullName evidence="1">Transcriptase subunit beta'</fullName>
    </alternativeName>
</protein>
<comment type="function">
    <text evidence="1">DNA-dependent RNA polymerase catalyzes the transcription of DNA into RNA using the four ribonucleoside triphosphates as substrates.</text>
</comment>
<comment type="catalytic activity">
    <reaction evidence="1">
        <text>RNA(n) + a ribonucleoside 5'-triphosphate = RNA(n+1) + diphosphate</text>
        <dbReference type="Rhea" id="RHEA:21248"/>
        <dbReference type="Rhea" id="RHEA-COMP:14527"/>
        <dbReference type="Rhea" id="RHEA-COMP:17342"/>
        <dbReference type="ChEBI" id="CHEBI:33019"/>
        <dbReference type="ChEBI" id="CHEBI:61557"/>
        <dbReference type="ChEBI" id="CHEBI:140395"/>
        <dbReference type="EC" id="2.7.7.6"/>
    </reaction>
</comment>
<comment type="cofactor">
    <cofactor evidence="1">
        <name>Mg(2+)</name>
        <dbReference type="ChEBI" id="CHEBI:18420"/>
    </cofactor>
    <text evidence="1">Binds 1 Mg(2+) ion per subunit.</text>
</comment>
<comment type="cofactor">
    <cofactor evidence="1">
        <name>Zn(2+)</name>
        <dbReference type="ChEBI" id="CHEBI:29105"/>
    </cofactor>
    <text evidence="1">Binds 2 Zn(2+) ions per subunit.</text>
</comment>
<comment type="subunit">
    <text evidence="1">The RNAP catalytic core consists of 2 alpha, 1 beta, 1 beta' and 1 omega subunit. When a sigma factor is associated with the core the holoenzyme is formed, which can initiate transcription.</text>
</comment>
<comment type="similarity">
    <text evidence="1">Belongs to the RNA polymerase beta' chain family.</text>
</comment>
<keyword id="KW-0240">DNA-directed RNA polymerase</keyword>
<keyword id="KW-0460">Magnesium</keyword>
<keyword id="KW-0479">Metal-binding</keyword>
<keyword id="KW-0548">Nucleotidyltransferase</keyword>
<keyword id="KW-0804">Transcription</keyword>
<keyword id="KW-0808">Transferase</keyword>
<keyword id="KW-0862">Zinc</keyword>
<dbReference type="EC" id="2.7.7.6" evidence="1"/>
<dbReference type="EMBL" id="FM211187">
    <property type="protein sequence ID" value="CAR69732.1"/>
    <property type="molecule type" value="Genomic_DNA"/>
</dbReference>
<dbReference type="RefSeq" id="WP_000228756.1">
    <property type="nucleotide sequence ID" value="NC_011900.1"/>
</dbReference>
<dbReference type="SMR" id="B8ZNW6"/>
<dbReference type="KEGG" id="sne:SPN23F19810"/>
<dbReference type="HOGENOM" id="CLU_000524_3_1_9"/>
<dbReference type="GO" id="GO:0000428">
    <property type="term" value="C:DNA-directed RNA polymerase complex"/>
    <property type="evidence" value="ECO:0007669"/>
    <property type="project" value="UniProtKB-KW"/>
</dbReference>
<dbReference type="GO" id="GO:0003677">
    <property type="term" value="F:DNA binding"/>
    <property type="evidence" value="ECO:0007669"/>
    <property type="project" value="UniProtKB-UniRule"/>
</dbReference>
<dbReference type="GO" id="GO:0003899">
    <property type="term" value="F:DNA-directed RNA polymerase activity"/>
    <property type="evidence" value="ECO:0007669"/>
    <property type="project" value="UniProtKB-UniRule"/>
</dbReference>
<dbReference type="GO" id="GO:0000287">
    <property type="term" value="F:magnesium ion binding"/>
    <property type="evidence" value="ECO:0007669"/>
    <property type="project" value="UniProtKB-UniRule"/>
</dbReference>
<dbReference type="GO" id="GO:0008270">
    <property type="term" value="F:zinc ion binding"/>
    <property type="evidence" value="ECO:0007669"/>
    <property type="project" value="UniProtKB-UniRule"/>
</dbReference>
<dbReference type="GO" id="GO:0006351">
    <property type="term" value="P:DNA-templated transcription"/>
    <property type="evidence" value="ECO:0007669"/>
    <property type="project" value="UniProtKB-UniRule"/>
</dbReference>
<dbReference type="CDD" id="cd02655">
    <property type="entry name" value="RNAP_beta'_C"/>
    <property type="match status" value="1"/>
</dbReference>
<dbReference type="CDD" id="cd01609">
    <property type="entry name" value="RNAP_beta'_N"/>
    <property type="match status" value="1"/>
</dbReference>
<dbReference type="FunFam" id="1.10.150.390:FF:000002">
    <property type="entry name" value="DNA-directed RNA polymerase subunit beta"/>
    <property type="match status" value="1"/>
</dbReference>
<dbReference type="FunFam" id="4.10.860.120:FF:000001">
    <property type="entry name" value="DNA-directed RNA polymerase subunit beta"/>
    <property type="match status" value="1"/>
</dbReference>
<dbReference type="Gene3D" id="1.10.132.30">
    <property type="match status" value="1"/>
</dbReference>
<dbReference type="Gene3D" id="1.10.150.390">
    <property type="match status" value="1"/>
</dbReference>
<dbReference type="Gene3D" id="1.10.1790.20">
    <property type="match status" value="1"/>
</dbReference>
<dbReference type="Gene3D" id="1.10.40.90">
    <property type="match status" value="1"/>
</dbReference>
<dbReference type="Gene3D" id="2.40.40.20">
    <property type="match status" value="1"/>
</dbReference>
<dbReference type="Gene3D" id="2.40.50.100">
    <property type="match status" value="1"/>
</dbReference>
<dbReference type="Gene3D" id="4.10.860.120">
    <property type="entry name" value="RNA polymerase II, clamp domain"/>
    <property type="match status" value="1"/>
</dbReference>
<dbReference type="Gene3D" id="1.10.274.100">
    <property type="entry name" value="RNA polymerase Rpb1, domain 3"/>
    <property type="match status" value="1"/>
</dbReference>
<dbReference type="HAMAP" id="MF_01322">
    <property type="entry name" value="RNApol_bact_RpoC"/>
    <property type="match status" value="1"/>
</dbReference>
<dbReference type="InterPro" id="IPR045867">
    <property type="entry name" value="DNA-dir_RpoC_beta_prime"/>
</dbReference>
<dbReference type="InterPro" id="IPR012754">
    <property type="entry name" value="DNA-dir_RpoC_beta_prime_bact"/>
</dbReference>
<dbReference type="InterPro" id="IPR000722">
    <property type="entry name" value="RNA_pol_asu"/>
</dbReference>
<dbReference type="InterPro" id="IPR006592">
    <property type="entry name" value="RNA_pol_N"/>
</dbReference>
<dbReference type="InterPro" id="IPR007080">
    <property type="entry name" value="RNA_pol_Rpb1_1"/>
</dbReference>
<dbReference type="InterPro" id="IPR007066">
    <property type="entry name" value="RNA_pol_Rpb1_3"/>
</dbReference>
<dbReference type="InterPro" id="IPR042102">
    <property type="entry name" value="RNA_pol_Rpb1_3_sf"/>
</dbReference>
<dbReference type="InterPro" id="IPR007083">
    <property type="entry name" value="RNA_pol_Rpb1_4"/>
</dbReference>
<dbReference type="InterPro" id="IPR007081">
    <property type="entry name" value="RNA_pol_Rpb1_5"/>
</dbReference>
<dbReference type="InterPro" id="IPR044893">
    <property type="entry name" value="RNA_pol_Rpb1_clamp_domain"/>
</dbReference>
<dbReference type="InterPro" id="IPR038120">
    <property type="entry name" value="Rpb1_funnel_sf"/>
</dbReference>
<dbReference type="NCBIfam" id="TIGR02386">
    <property type="entry name" value="rpoC_TIGR"/>
    <property type="match status" value="1"/>
</dbReference>
<dbReference type="PANTHER" id="PTHR19376">
    <property type="entry name" value="DNA-DIRECTED RNA POLYMERASE"/>
    <property type="match status" value="1"/>
</dbReference>
<dbReference type="PANTHER" id="PTHR19376:SF54">
    <property type="entry name" value="DNA-DIRECTED RNA POLYMERASE SUBUNIT BETA"/>
    <property type="match status" value="1"/>
</dbReference>
<dbReference type="Pfam" id="PF04997">
    <property type="entry name" value="RNA_pol_Rpb1_1"/>
    <property type="match status" value="1"/>
</dbReference>
<dbReference type="Pfam" id="PF00623">
    <property type="entry name" value="RNA_pol_Rpb1_2"/>
    <property type="match status" value="2"/>
</dbReference>
<dbReference type="Pfam" id="PF04983">
    <property type="entry name" value="RNA_pol_Rpb1_3"/>
    <property type="match status" value="1"/>
</dbReference>
<dbReference type="Pfam" id="PF05000">
    <property type="entry name" value="RNA_pol_Rpb1_4"/>
    <property type="match status" value="1"/>
</dbReference>
<dbReference type="Pfam" id="PF04998">
    <property type="entry name" value="RNA_pol_Rpb1_5"/>
    <property type="match status" value="1"/>
</dbReference>
<dbReference type="SMART" id="SM00663">
    <property type="entry name" value="RPOLA_N"/>
    <property type="match status" value="1"/>
</dbReference>
<dbReference type="SUPFAM" id="SSF64484">
    <property type="entry name" value="beta and beta-prime subunits of DNA dependent RNA-polymerase"/>
    <property type="match status" value="1"/>
</dbReference>
<evidence type="ECO:0000255" key="1">
    <source>
        <dbReference type="HAMAP-Rule" id="MF_01322"/>
    </source>
</evidence>
<reference key="1">
    <citation type="journal article" date="2009" name="J. Bacteriol.">
        <title>Role of conjugative elements in the evolution of the multidrug-resistant pandemic clone Streptococcus pneumoniae Spain23F ST81.</title>
        <authorList>
            <person name="Croucher N.J."/>
            <person name="Walker D."/>
            <person name="Romero P."/>
            <person name="Lennard N."/>
            <person name="Paterson G.K."/>
            <person name="Bason N.C."/>
            <person name="Mitchell A.M."/>
            <person name="Quail M.A."/>
            <person name="Andrew P.W."/>
            <person name="Parkhill J."/>
            <person name="Bentley S.D."/>
            <person name="Mitchell T.J."/>
        </authorList>
    </citation>
    <scope>NUCLEOTIDE SEQUENCE [LARGE SCALE GENOMIC DNA]</scope>
    <source>
        <strain>ATCC 700669 / Spain 23F-1</strain>
    </source>
</reference>